<keyword id="KW-0378">Hydrolase</keyword>
<keyword id="KW-1185">Reference proteome</keyword>
<dbReference type="EMBL" id="Y08257">
    <property type="protein sequence ID" value="CAA69552.1"/>
    <property type="molecule type" value="Genomic_DNA"/>
</dbReference>
<dbReference type="EMBL" id="AE006641">
    <property type="protein sequence ID" value="AAK40455.1"/>
    <property type="molecule type" value="Genomic_DNA"/>
</dbReference>
<dbReference type="PIR" id="S75390">
    <property type="entry name" value="S75390"/>
</dbReference>
<dbReference type="RefSeq" id="WP_009988913.1">
    <property type="nucleotide sequence ID" value="NC_002754.1"/>
</dbReference>
<dbReference type="SMR" id="P95962"/>
<dbReference type="FunCoup" id="P95962">
    <property type="interactions" value="11"/>
</dbReference>
<dbReference type="STRING" id="273057.SSO0099"/>
<dbReference type="PaxDb" id="273057-SSO0099"/>
<dbReference type="EnsemblBacteria" id="AAK40455">
    <property type="protein sequence ID" value="AAK40455"/>
    <property type="gene ID" value="SSO0099"/>
</dbReference>
<dbReference type="KEGG" id="sso:SSO0099"/>
<dbReference type="PATRIC" id="fig|273057.12.peg.96"/>
<dbReference type="eggNOG" id="arCOG00497">
    <property type="taxonomic scope" value="Archaea"/>
</dbReference>
<dbReference type="HOGENOM" id="CLU_070010_4_0_2"/>
<dbReference type="InParanoid" id="P95962"/>
<dbReference type="PhylomeDB" id="P95962"/>
<dbReference type="Proteomes" id="UP000001974">
    <property type="component" value="Chromosome"/>
</dbReference>
<dbReference type="GO" id="GO:0016787">
    <property type="term" value="F:hydrolase activity"/>
    <property type="evidence" value="ECO:0000318"/>
    <property type="project" value="GO_Central"/>
</dbReference>
<dbReference type="Gene3D" id="3.60.15.10">
    <property type="entry name" value="Ribonuclease Z/Hydroxyacylglutathione hydrolase-like"/>
    <property type="match status" value="1"/>
</dbReference>
<dbReference type="HAMAP" id="MF_00457">
    <property type="entry name" value="UPF0173"/>
    <property type="match status" value="1"/>
</dbReference>
<dbReference type="InterPro" id="IPR001279">
    <property type="entry name" value="Metallo-B-lactamas"/>
</dbReference>
<dbReference type="InterPro" id="IPR036866">
    <property type="entry name" value="RibonucZ/Hydroxyglut_hydro"/>
</dbReference>
<dbReference type="InterPro" id="IPR022877">
    <property type="entry name" value="UPF0173"/>
</dbReference>
<dbReference type="InterPro" id="IPR050114">
    <property type="entry name" value="UPF0173_UPF0282_UlaG_hydrolase"/>
</dbReference>
<dbReference type="NCBIfam" id="NF001911">
    <property type="entry name" value="PRK00685.1"/>
    <property type="match status" value="1"/>
</dbReference>
<dbReference type="PANTHER" id="PTHR43546:SF3">
    <property type="entry name" value="UPF0173 METAL-DEPENDENT HYDROLASE MJ1163"/>
    <property type="match status" value="1"/>
</dbReference>
<dbReference type="PANTHER" id="PTHR43546">
    <property type="entry name" value="UPF0173 METAL-DEPENDENT HYDROLASE MJ1163-RELATED"/>
    <property type="match status" value="1"/>
</dbReference>
<dbReference type="Pfam" id="PF12706">
    <property type="entry name" value="Lactamase_B_2"/>
    <property type="match status" value="1"/>
</dbReference>
<dbReference type="SMART" id="SM00849">
    <property type="entry name" value="Lactamase_B"/>
    <property type="match status" value="1"/>
</dbReference>
<dbReference type="SUPFAM" id="SSF56281">
    <property type="entry name" value="Metallo-hydrolase/oxidoreductase"/>
    <property type="match status" value="1"/>
</dbReference>
<sequence>MAQLRWLGHAATLLTFGNKNVIIDPMIKDNPLSPVKLDYFKNNLDIIIVTHDHYDHLGDTVELLRMNPKAKLFATYDLEAHLAETYKISEESIIPANVGGFVEVDGIKLALTKAVHSSTHSDPTGAIVSAEGITVYHAGDTGLFEDMKLIGEVFKPDYALLPIGGRFTMDPYQASISVELIKPKKGAIPIHYNTWDLIKVDVNDFVKLVKNKGYNPIVLQPGQTITL</sequence>
<name>Y099_SACS2</name>
<reference key="1">
    <citation type="journal article" date="1996" name="Mol. Microbiol.">
        <title>Organizational characteristics and information content of an archaeal genome: 156 kb of sequence from Sulfolobus solfataricus P2.</title>
        <authorList>
            <person name="Sensen C.W."/>
            <person name="Klenk H.-P."/>
            <person name="Singh R.K."/>
            <person name="Allard G."/>
            <person name="Chan C.C.-Y."/>
            <person name="Liu Q.Y."/>
            <person name="Penny S.L."/>
            <person name="Young F."/>
            <person name="Schenk M.E."/>
            <person name="Gaasterland T."/>
            <person name="Doolittle W.F."/>
            <person name="Ragan M.A."/>
            <person name="Charlebois R.L."/>
        </authorList>
    </citation>
    <scope>NUCLEOTIDE SEQUENCE [GENOMIC DNA]</scope>
    <source>
        <strain>ATCC 35092 / DSM 1617 / JCM 11322 / P2</strain>
    </source>
</reference>
<reference key="2">
    <citation type="journal article" date="2001" name="Proc. Natl. Acad. Sci. U.S.A.">
        <title>The complete genome of the crenarchaeon Sulfolobus solfataricus P2.</title>
        <authorList>
            <person name="She Q."/>
            <person name="Singh R.K."/>
            <person name="Confalonieri F."/>
            <person name="Zivanovic Y."/>
            <person name="Allard G."/>
            <person name="Awayez M.J."/>
            <person name="Chan-Weiher C.C.-Y."/>
            <person name="Clausen I.G."/>
            <person name="Curtis B.A."/>
            <person name="De Moors A."/>
            <person name="Erauso G."/>
            <person name="Fletcher C."/>
            <person name="Gordon P.M.K."/>
            <person name="Heikamp-de Jong I."/>
            <person name="Jeffries A.C."/>
            <person name="Kozera C.J."/>
            <person name="Medina N."/>
            <person name="Peng X."/>
            <person name="Thi-Ngoc H.P."/>
            <person name="Redder P."/>
            <person name="Schenk M.E."/>
            <person name="Theriault C."/>
            <person name="Tolstrup N."/>
            <person name="Charlebois R.L."/>
            <person name="Doolittle W.F."/>
            <person name="Duguet M."/>
            <person name="Gaasterland T."/>
            <person name="Garrett R.A."/>
            <person name="Ragan M.A."/>
            <person name="Sensen C.W."/>
            <person name="Van der Oost J."/>
        </authorList>
    </citation>
    <scope>NUCLEOTIDE SEQUENCE [LARGE SCALE GENOMIC DNA]</scope>
    <source>
        <strain>ATCC 35092 / DSM 1617 / JCM 11322 / P2</strain>
    </source>
</reference>
<proteinExistence type="inferred from homology"/>
<organism>
    <name type="scientific">Saccharolobus solfataricus (strain ATCC 35092 / DSM 1617 / JCM 11322 / P2)</name>
    <name type="common">Sulfolobus solfataricus</name>
    <dbReference type="NCBI Taxonomy" id="273057"/>
    <lineage>
        <taxon>Archaea</taxon>
        <taxon>Thermoproteota</taxon>
        <taxon>Thermoprotei</taxon>
        <taxon>Sulfolobales</taxon>
        <taxon>Sulfolobaceae</taxon>
        <taxon>Saccharolobus</taxon>
    </lineage>
</organism>
<protein>
    <recommendedName>
        <fullName evidence="1">UPF0173 metal-dependent hydrolase SSO0099</fullName>
    </recommendedName>
</protein>
<evidence type="ECO:0000255" key="1">
    <source>
        <dbReference type="HAMAP-Rule" id="MF_00457"/>
    </source>
</evidence>
<accession>P95962</accession>
<gene>
    <name type="ordered locus">SSO0099</name>
    <name type="ORF">C04023</name>
</gene>
<feature type="chain" id="PRO_0000156405" description="UPF0173 metal-dependent hydrolase SSO0099">
    <location>
        <begin position="1"/>
        <end position="227"/>
    </location>
</feature>
<comment type="similarity">
    <text evidence="1">Belongs to the UPF0173 family.</text>
</comment>